<organism>
    <name type="scientific">Arabidopsis thaliana</name>
    <name type="common">Mouse-ear cress</name>
    <dbReference type="NCBI Taxonomy" id="3702"/>
    <lineage>
        <taxon>Eukaryota</taxon>
        <taxon>Viridiplantae</taxon>
        <taxon>Streptophyta</taxon>
        <taxon>Embryophyta</taxon>
        <taxon>Tracheophyta</taxon>
        <taxon>Spermatophyta</taxon>
        <taxon>Magnoliopsida</taxon>
        <taxon>eudicotyledons</taxon>
        <taxon>Gunneridae</taxon>
        <taxon>Pentapetalae</taxon>
        <taxon>rosids</taxon>
        <taxon>malvids</taxon>
        <taxon>Brassicales</taxon>
        <taxon>Brassicaceae</taxon>
        <taxon>Camelineae</taxon>
        <taxon>Arabidopsis</taxon>
    </lineage>
</organism>
<evidence type="ECO:0000255" key="1"/>
<evidence type="ECO:0000305" key="2"/>
<evidence type="ECO:0000312" key="3">
    <source>
        <dbReference type="Araport" id="AT2G07739"/>
    </source>
</evidence>
<evidence type="ECO:0000312" key="4">
    <source>
        <dbReference type="Araport" id="ATMG00370"/>
    </source>
</evidence>
<geneLocation type="mitochondrion"/>
<accession>P93296</accession>
<accession>Q27GL5</accession>
<accession>Q8S8J2</accession>
<comment type="subcellular location">
    <subcellularLocation>
        <location evidence="2">Mitochondrion membrane</location>
        <topology evidence="2">Multi-pass membrane protein</topology>
    </subcellularLocation>
</comment>
<comment type="miscellaneous">
    <text>A stretch of 270 kb of the mitochondrial genome is duplicated within the centromere of chromosome 2 resulting in the duplication of the gene. The expression of this duplicated gene (At2g07739) is not demonstrated.</text>
</comment>
<comment type="similarity">
    <text evidence="2">Belongs to the ycf1 family.</text>
</comment>
<name>M370_ARATH</name>
<proteinExistence type="inferred from homology"/>
<sequence>MVFQSFILGNLVYLCMKIINSVVVVGLYYGFLTTFSIGPSYLFLLRARVMDEGEEGTEKKVSATTGFIAGQLMMFISIYYAPLHLALGRPHTITVLALPYLLFHFFFWNNHKHFFDYGSTTRNEMRNLRIQCVFPNNLIFKLFNHLILPSSMLARLVNIYMFRCNNKMLFVTSSFVVCVRMLLVEWAFPLFQLFLVMKV</sequence>
<protein>
    <recommendedName>
        <fullName>Uncharacterized mitochondrial protein AtMg00370</fullName>
    </recommendedName>
    <alternativeName>
        <fullName>ORF199</fullName>
    </alternativeName>
</protein>
<gene>
    <name evidence="4" type="ordered locus">AtMg00370</name>
</gene>
<gene>
    <name evidence="3" type="ordered locus">At2g07739</name>
</gene>
<dbReference type="EMBL" id="Y08501">
    <property type="protein sequence ID" value="CAA69776.1"/>
    <property type="molecule type" value="Genomic_DNA"/>
</dbReference>
<dbReference type="EMBL" id="BK010421">
    <property type="status" value="NOT_ANNOTATED_CDS"/>
    <property type="molecule type" value="Genomic_DNA"/>
</dbReference>
<dbReference type="EMBL" id="AC006225">
    <property type="protein sequence ID" value="AAM15168.1"/>
    <property type="molecule type" value="Genomic_DNA"/>
</dbReference>
<dbReference type="EMBL" id="CP002685">
    <property type="protein sequence ID" value="AEC06124.1"/>
    <property type="molecule type" value="Genomic_DNA"/>
</dbReference>
<dbReference type="RefSeq" id="NP_085501.1">
    <property type="nucleotide sequence ID" value="NC_001284.2"/>
</dbReference>
<dbReference type="RefSeq" id="NP_178809.1">
    <property type="nucleotide sequence ID" value="NM_126767.2"/>
</dbReference>
<dbReference type="SMR" id="P93296"/>
<dbReference type="STRING" id="3702.P93296"/>
<dbReference type="PaxDb" id="3702-ATMG00370.1"/>
<dbReference type="ProteomicsDB" id="238644"/>
<dbReference type="EnsemblPlants" id="ATMG00370.1">
    <property type="protein sequence ID" value="ATMG00370.1"/>
    <property type="gene ID" value="ATMG00370"/>
</dbReference>
<dbReference type="GeneID" id="815412"/>
<dbReference type="Gramene" id="ATMG00370.1">
    <property type="protein sequence ID" value="ATMG00370.1"/>
    <property type="gene ID" value="ATMG00370"/>
</dbReference>
<dbReference type="KEGG" id="ath:AT2G07739"/>
<dbReference type="Araport" id="AT2G07739"/>
<dbReference type="Araport" id="ATMG00370"/>
<dbReference type="TAIR" id="AT2G07739"/>
<dbReference type="TAIR" id="ATMG00370">
    <property type="gene designation" value="ORF199"/>
</dbReference>
<dbReference type="eggNOG" id="ENOG502QSDY">
    <property type="taxonomic scope" value="Eukaryota"/>
</dbReference>
<dbReference type="HOGENOM" id="CLU_118812_0_0_1"/>
<dbReference type="InParanoid" id="P93296"/>
<dbReference type="OMA" id="VWIQENN"/>
<dbReference type="OrthoDB" id="1069278at2759"/>
<dbReference type="PRO" id="PR:P93296"/>
<dbReference type="Proteomes" id="UP000006548">
    <property type="component" value="Chromosome 2"/>
</dbReference>
<dbReference type="Proteomes" id="UP000006548">
    <property type="component" value="Mitochondrion MT"/>
</dbReference>
<dbReference type="ExpressionAtlas" id="P93296">
    <property type="expression patterns" value="baseline and differential"/>
</dbReference>
<dbReference type="GO" id="GO:0031966">
    <property type="term" value="C:mitochondrial membrane"/>
    <property type="evidence" value="ECO:0007669"/>
    <property type="project" value="UniProtKB-SubCell"/>
</dbReference>
<dbReference type="InterPro" id="IPR008896">
    <property type="entry name" value="TIC214"/>
</dbReference>
<dbReference type="PANTHER" id="PTHR33163:SF40">
    <property type="entry name" value="PROTEIN TIC 214"/>
    <property type="match status" value="1"/>
</dbReference>
<dbReference type="PANTHER" id="PTHR33163">
    <property type="entry name" value="PROTEIN TIC 214-RELATED"/>
    <property type="match status" value="1"/>
</dbReference>
<dbReference type="Pfam" id="PF05758">
    <property type="entry name" value="Ycf1"/>
    <property type="match status" value="1"/>
</dbReference>
<feature type="chain" id="PRO_0000196767" description="Uncharacterized mitochondrial protein AtMg00370">
    <location>
        <begin position="1"/>
        <end position="199"/>
    </location>
</feature>
<feature type="transmembrane region" description="Helical" evidence="1">
    <location>
        <begin position="22"/>
        <end position="44"/>
    </location>
</feature>
<feature type="transmembrane region" description="Helical" evidence="1">
    <location>
        <begin position="65"/>
        <end position="87"/>
    </location>
</feature>
<feature type="transmembrane region" description="Helical" evidence="1">
    <location>
        <begin position="91"/>
        <end position="108"/>
    </location>
</feature>
<feature type="sequence conflict" description="In Ref. 3; AAM15168 and 4; AEC06124." evidence="2" ref="3 4">
    <original>S</original>
    <variation>F</variation>
    <location>
        <position position="40"/>
    </location>
</feature>
<keyword id="KW-0472">Membrane</keyword>
<keyword id="KW-0496">Mitochondrion</keyword>
<keyword id="KW-1185">Reference proteome</keyword>
<keyword id="KW-0812">Transmembrane</keyword>
<keyword id="KW-1133">Transmembrane helix</keyword>
<reference key="1">
    <citation type="journal article" date="1997" name="Nat. Genet.">
        <title>The mitochondrial genome of Arabidopsis thaliana contains 57 genes in 366,924 nucleotides.</title>
        <authorList>
            <person name="Unseld M."/>
            <person name="Marienfeld J.R."/>
            <person name="Brandt P."/>
            <person name="Brennicke A."/>
        </authorList>
    </citation>
    <scope>NUCLEOTIDE SEQUENCE [LARGE SCALE GENOMIC DNA]</scope>
    <source>
        <strain>cv. C24</strain>
    </source>
</reference>
<reference key="2">
    <citation type="journal article" date="2018" name="Plant Cell">
        <title>Correction of persistent errors in Arabidopsis reference mitochondrial genomes.</title>
        <authorList>
            <person name="Sloan D.B."/>
            <person name="Wu Z."/>
            <person name="Sharbrough J."/>
        </authorList>
    </citation>
    <scope>NUCLEOTIDE SEQUENCE [LARGE SCALE GENOMIC DNA]</scope>
    <source>
        <strain>cv. Columbia</strain>
    </source>
</reference>
<reference key="3">
    <citation type="journal article" date="1999" name="Nature">
        <title>Sequence and analysis of chromosome 2 of the plant Arabidopsis thaliana.</title>
        <authorList>
            <person name="Lin X."/>
            <person name="Kaul S."/>
            <person name="Rounsley S.D."/>
            <person name="Shea T.P."/>
            <person name="Benito M.-I."/>
            <person name="Town C.D."/>
            <person name="Fujii C.Y."/>
            <person name="Mason T.M."/>
            <person name="Bowman C.L."/>
            <person name="Barnstead M.E."/>
            <person name="Feldblyum T.V."/>
            <person name="Buell C.R."/>
            <person name="Ketchum K.A."/>
            <person name="Lee J.J."/>
            <person name="Ronning C.M."/>
            <person name="Koo H.L."/>
            <person name="Moffat K.S."/>
            <person name="Cronin L.A."/>
            <person name="Shen M."/>
            <person name="Pai G."/>
            <person name="Van Aken S."/>
            <person name="Umayam L."/>
            <person name="Tallon L.J."/>
            <person name="Gill J.E."/>
            <person name="Adams M.D."/>
            <person name="Carrera A.J."/>
            <person name="Creasy T.H."/>
            <person name="Goodman H.M."/>
            <person name="Somerville C.R."/>
            <person name="Copenhaver G.P."/>
            <person name="Preuss D."/>
            <person name="Nierman W.C."/>
            <person name="White O."/>
            <person name="Eisen J.A."/>
            <person name="Salzberg S.L."/>
            <person name="Fraser C.M."/>
            <person name="Venter J.C."/>
        </authorList>
    </citation>
    <scope>NUCLEOTIDE SEQUENCE [LARGE SCALE GENOMIC DNA] (AT2G07739)</scope>
    <source>
        <strain>cv. Columbia</strain>
    </source>
</reference>
<reference key="4">
    <citation type="journal article" date="2017" name="Plant J.">
        <title>Araport11: a complete reannotation of the Arabidopsis thaliana reference genome.</title>
        <authorList>
            <person name="Cheng C.Y."/>
            <person name="Krishnakumar V."/>
            <person name="Chan A.P."/>
            <person name="Thibaud-Nissen F."/>
            <person name="Schobel S."/>
            <person name="Town C.D."/>
        </authorList>
    </citation>
    <scope>GENOME REANNOTATION</scope>
    <scope>SEQUENCE REVISION (AT2G07739)</scope>
    <source>
        <strain>cv. Columbia</strain>
    </source>
</reference>